<evidence type="ECO:0000255" key="1">
    <source>
        <dbReference type="HAMAP-Rule" id="MF_00113"/>
    </source>
</evidence>
<protein>
    <recommendedName>
        <fullName evidence="1">S-adenosylmethionine:tRNA ribosyltransferase-isomerase</fullName>
        <ecNumber evidence="1">2.4.99.17</ecNumber>
    </recommendedName>
    <alternativeName>
        <fullName evidence="1">Queuosine biosynthesis protein QueA</fullName>
    </alternativeName>
</protein>
<reference key="1">
    <citation type="submission" date="2006-05" db="EMBL/GenBank/DDBJ databases">
        <title>Complete sequence of chromosome of Silicibacter sp. TM1040.</title>
        <authorList>
            <consortium name="US DOE Joint Genome Institute"/>
            <person name="Copeland A."/>
            <person name="Lucas S."/>
            <person name="Lapidus A."/>
            <person name="Barry K."/>
            <person name="Detter J.C."/>
            <person name="Glavina del Rio T."/>
            <person name="Hammon N."/>
            <person name="Israni S."/>
            <person name="Dalin E."/>
            <person name="Tice H."/>
            <person name="Pitluck S."/>
            <person name="Brettin T."/>
            <person name="Bruce D."/>
            <person name="Han C."/>
            <person name="Tapia R."/>
            <person name="Goodwin L."/>
            <person name="Thompson L.S."/>
            <person name="Gilna P."/>
            <person name="Schmutz J."/>
            <person name="Larimer F."/>
            <person name="Land M."/>
            <person name="Hauser L."/>
            <person name="Kyrpides N."/>
            <person name="Kim E."/>
            <person name="Belas R."/>
            <person name="Moran M.A."/>
            <person name="Buchan A."/>
            <person name="Gonzalez J.M."/>
            <person name="Schell M.A."/>
            <person name="Sun F."/>
            <person name="Richardson P."/>
        </authorList>
    </citation>
    <scope>NUCLEOTIDE SEQUENCE [LARGE SCALE GENOMIC DNA]</scope>
    <source>
        <strain>TM1040</strain>
    </source>
</reference>
<gene>
    <name evidence="1" type="primary">queA</name>
    <name type="ordered locus">TM1040_1093</name>
</gene>
<name>QUEA_RUEST</name>
<dbReference type="EC" id="2.4.99.17" evidence="1"/>
<dbReference type="EMBL" id="CP000377">
    <property type="protein sequence ID" value="ABF63826.1"/>
    <property type="molecule type" value="Genomic_DNA"/>
</dbReference>
<dbReference type="RefSeq" id="WP_011538433.1">
    <property type="nucleotide sequence ID" value="NC_008044.1"/>
</dbReference>
<dbReference type="SMR" id="Q1GHP0"/>
<dbReference type="STRING" id="292414.TM1040_1093"/>
<dbReference type="KEGG" id="sit:TM1040_1093"/>
<dbReference type="eggNOG" id="COG0809">
    <property type="taxonomic scope" value="Bacteria"/>
</dbReference>
<dbReference type="HOGENOM" id="CLU_039110_1_1_5"/>
<dbReference type="OrthoDB" id="9805933at2"/>
<dbReference type="UniPathway" id="UPA00392"/>
<dbReference type="Proteomes" id="UP000000636">
    <property type="component" value="Chromosome"/>
</dbReference>
<dbReference type="GO" id="GO:0005737">
    <property type="term" value="C:cytoplasm"/>
    <property type="evidence" value="ECO:0007669"/>
    <property type="project" value="UniProtKB-SubCell"/>
</dbReference>
<dbReference type="GO" id="GO:0051075">
    <property type="term" value="F:S-adenosylmethionine:tRNA ribosyltransferase-isomerase activity"/>
    <property type="evidence" value="ECO:0007669"/>
    <property type="project" value="UniProtKB-EC"/>
</dbReference>
<dbReference type="GO" id="GO:0008616">
    <property type="term" value="P:queuosine biosynthetic process"/>
    <property type="evidence" value="ECO:0007669"/>
    <property type="project" value="UniProtKB-UniRule"/>
</dbReference>
<dbReference type="GO" id="GO:0002099">
    <property type="term" value="P:tRNA wobble guanine modification"/>
    <property type="evidence" value="ECO:0007669"/>
    <property type="project" value="TreeGrafter"/>
</dbReference>
<dbReference type="FunFam" id="3.40.1780.10:FF:000001">
    <property type="entry name" value="S-adenosylmethionine:tRNA ribosyltransferase-isomerase"/>
    <property type="match status" value="1"/>
</dbReference>
<dbReference type="Gene3D" id="2.40.10.240">
    <property type="entry name" value="QueA-like"/>
    <property type="match status" value="1"/>
</dbReference>
<dbReference type="Gene3D" id="3.40.1780.10">
    <property type="entry name" value="QueA-like"/>
    <property type="match status" value="1"/>
</dbReference>
<dbReference type="HAMAP" id="MF_00113">
    <property type="entry name" value="QueA"/>
    <property type="match status" value="1"/>
</dbReference>
<dbReference type="InterPro" id="IPR003699">
    <property type="entry name" value="QueA"/>
</dbReference>
<dbReference type="InterPro" id="IPR042118">
    <property type="entry name" value="QueA_dom1"/>
</dbReference>
<dbReference type="InterPro" id="IPR042119">
    <property type="entry name" value="QueA_dom2"/>
</dbReference>
<dbReference type="InterPro" id="IPR036100">
    <property type="entry name" value="QueA_sf"/>
</dbReference>
<dbReference type="NCBIfam" id="NF001140">
    <property type="entry name" value="PRK00147.1"/>
    <property type="match status" value="1"/>
</dbReference>
<dbReference type="NCBIfam" id="TIGR00113">
    <property type="entry name" value="queA"/>
    <property type="match status" value="1"/>
</dbReference>
<dbReference type="PANTHER" id="PTHR30307">
    <property type="entry name" value="S-ADENOSYLMETHIONINE:TRNA RIBOSYLTRANSFERASE-ISOMERASE"/>
    <property type="match status" value="1"/>
</dbReference>
<dbReference type="PANTHER" id="PTHR30307:SF0">
    <property type="entry name" value="S-ADENOSYLMETHIONINE:TRNA RIBOSYLTRANSFERASE-ISOMERASE"/>
    <property type="match status" value="1"/>
</dbReference>
<dbReference type="Pfam" id="PF02547">
    <property type="entry name" value="Queuosine_synth"/>
    <property type="match status" value="1"/>
</dbReference>
<dbReference type="SUPFAM" id="SSF111337">
    <property type="entry name" value="QueA-like"/>
    <property type="match status" value="1"/>
</dbReference>
<keyword id="KW-0963">Cytoplasm</keyword>
<keyword id="KW-0671">Queuosine biosynthesis</keyword>
<keyword id="KW-1185">Reference proteome</keyword>
<keyword id="KW-0949">S-adenosyl-L-methionine</keyword>
<keyword id="KW-0808">Transferase</keyword>
<feature type="chain" id="PRO_1000015279" description="S-adenosylmethionine:tRNA ribosyltransferase-isomerase">
    <location>
        <begin position="1"/>
        <end position="349"/>
    </location>
</feature>
<accession>Q1GHP0</accession>
<sequence>MKLGDFDFDLPEELIATRPAVPRSSARLLVAEQDRISDGRVTDLLDWLAPGDRLVLNDTRVIPARLSGQRHRNSAQGPVSARIEVTLLEPQADGSWAGLLKPLKKIKIGETLRFSDALSAELVDVVDGQGRLRFNLAGDDFDAALAEAGAMPLPPYIAAKRPADEQDKTDYQTVWARNSGAVAAPTASLHFDEPLLKALSEKGVTFTYVTLHVGAGTFLPVKVEDVTTHKMHAEWGQVTPEAAAEIAATKAAGNRVIPVGTTALRLIESAARESGAITPWEGETDIFIYPGFEFRVADALMTNFHLPKSTLMMLVSALMGQDRIRAIYAHAVKERYRFFSYGDASLLIP</sequence>
<organism>
    <name type="scientific">Ruegeria sp. (strain TM1040)</name>
    <name type="common">Silicibacter sp.</name>
    <dbReference type="NCBI Taxonomy" id="292414"/>
    <lineage>
        <taxon>Bacteria</taxon>
        <taxon>Pseudomonadati</taxon>
        <taxon>Pseudomonadota</taxon>
        <taxon>Alphaproteobacteria</taxon>
        <taxon>Rhodobacterales</taxon>
        <taxon>Roseobacteraceae</taxon>
        <taxon>Ruegeria</taxon>
    </lineage>
</organism>
<comment type="function">
    <text evidence="1">Transfers and isomerizes the ribose moiety from AdoMet to the 7-aminomethyl group of 7-deazaguanine (preQ1-tRNA) to give epoxyqueuosine (oQ-tRNA).</text>
</comment>
<comment type="catalytic activity">
    <reaction evidence="1">
        <text>7-aminomethyl-7-carbaguanosine(34) in tRNA + S-adenosyl-L-methionine = epoxyqueuosine(34) in tRNA + adenine + L-methionine + 2 H(+)</text>
        <dbReference type="Rhea" id="RHEA:32155"/>
        <dbReference type="Rhea" id="RHEA-COMP:10342"/>
        <dbReference type="Rhea" id="RHEA-COMP:18582"/>
        <dbReference type="ChEBI" id="CHEBI:15378"/>
        <dbReference type="ChEBI" id="CHEBI:16708"/>
        <dbReference type="ChEBI" id="CHEBI:57844"/>
        <dbReference type="ChEBI" id="CHEBI:59789"/>
        <dbReference type="ChEBI" id="CHEBI:82833"/>
        <dbReference type="ChEBI" id="CHEBI:194443"/>
        <dbReference type="EC" id="2.4.99.17"/>
    </reaction>
</comment>
<comment type="pathway">
    <text evidence="1">tRNA modification; tRNA-queuosine biosynthesis.</text>
</comment>
<comment type="subunit">
    <text evidence="1">Monomer.</text>
</comment>
<comment type="subcellular location">
    <subcellularLocation>
        <location evidence="1">Cytoplasm</location>
    </subcellularLocation>
</comment>
<comment type="similarity">
    <text evidence="1">Belongs to the QueA family.</text>
</comment>
<proteinExistence type="inferred from homology"/>